<accession>Q8XG70</accession>
<accession>Q7AMX8</accession>
<reference key="1">
    <citation type="journal article" date="2001" name="Nature">
        <title>Complete genome sequence of a multiple drug resistant Salmonella enterica serovar Typhi CT18.</title>
        <authorList>
            <person name="Parkhill J."/>
            <person name="Dougan G."/>
            <person name="James K.D."/>
            <person name="Thomson N.R."/>
            <person name="Pickard D."/>
            <person name="Wain J."/>
            <person name="Churcher C.M."/>
            <person name="Mungall K.L."/>
            <person name="Bentley S.D."/>
            <person name="Holden M.T.G."/>
            <person name="Sebaihia M."/>
            <person name="Baker S."/>
            <person name="Basham D."/>
            <person name="Brooks K."/>
            <person name="Chillingworth T."/>
            <person name="Connerton P."/>
            <person name="Cronin A."/>
            <person name="Davis P."/>
            <person name="Davies R.M."/>
            <person name="Dowd L."/>
            <person name="White N."/>
            <person name="Farrar J."/>
            <person name="Feltwell T."/>
            <person name="Hamlin N."/>
            <person name="Haque A."/>
            <person name="Hien T.T."/>
            <person name="Holroyd S."/>
            <person name="Jagels K."/>
            <person name="Krogh A."/>
            <person name="Larsen T.S."/>
            <person name="Leather S."/>
            <person name="Moule S."/>
            <person name="O'Gaora P."/>
            <person name="Parry C."/>
            <person name="Quail M.A."/>
            <person name="Rutherford K.M."/>
            <person name="Simmonds M."/>
            <person name="Skelton J."/>
            <person name="Stevens K."/>
            <person name="Whitehead S."/>
            <person name="Barrell B.G."/>
        </authorList>
    </citation>
    <scope>NUCLEOTIDE SEQUENCE [LARGE SCALE GENOMIC DNA]</scope>
    <source>
        <strain>CT18</strain>
    </source>
</reference>
<reference key="2">
    <citation type="journal article" date="2003" name="J. Bacteriol.">
        <title>Comparative genomics of Salmonella enterica serovar Typhi strains Ty2 and CT18.</title>
        <authorList>
            <person name="Deng W."/>
            <person name="Liou S.-R."/>
            <person name="Plunkett G. III"/>
            <person name="Mayhew G.F."/>
            <person name="Rose D.J."/>
            <person name="Burland V."/>
            <person name="Kodoyianni V."/>
            <person name="Schwartz D.C."/>
            <person name="Blattner F.R."/>
        </authorList>
    </citation>
    <scope>NUCLEOTIDE SEQUENCE [LARGE SCALE GENOMIC DNA]</scope>
    <source>
        <strain>ATCC 700931 / Ty2</strain>
    </source>
</reference>
<gene>
    <name evidence="1" type="primary">tyrS</name>
    <name type="ordered locus">STY1673</name>
    <name type="ordered locus">t1317</name>
</gene>
<feature type="chain" id="PRO_0000234764" description="Tyrosine--tRNA ligase">
    <location>
        <begin position="1"/>
        <end position="424"/>
    </location>
</feature>
<feature type="domain" description="S4 RNA-binding" evidence="1">
    <location>
        <begin position="357"/>
        <end position="414"/>
    </location>
</feature>
<feature type="short sequence motif" description="'HIGH' region">
    <location>
        <begin position="42"/>
        <end position="51"/>
    </location>
</feature>
<feature type="short sequence motif" description="'KMSKS' region">
    <location>
        <begin position="235"/>
        <end position="239"/>
    </location>
</feature>
<feature type="binding site" evidence="1">
    <location>
        <position position="37"/>
    </location>
    <ligand>
        <name>L-tyrosine</name>
        <dbReference type="ChEBI" id="CHEBI:58315"/>
    </ligand>
</feature>
<feature type="binding site" evidence="1">
    <location>
        <position position="175"/>
    </location>
    <ligand>
        <name>L-tyrosine</name>
        <dbReference type="ChEBI" id="CHEBI:58315"/>
    </ligand>
</feature>
<feature type="binding site" evidence="1">
    <location>
        <position position="179"/>
    </location>
    <ligand>
        <name>L-tyrosine</name>
        <dbReference type="ChEBI" id="CHEBI:58315"/>
    </ligand>
</feature>
<feature type="binding site" evidence="1">
    <location>
        <position position="238"/>
    </location>
    <ligand>
        <name>ATP</name>
        <dbReference type="ChEBI" id="CHEBI:30616"/>
    </ligand>
</feature>
<organism>
    <name type="scientific">Salmonella typhi</name>
    <dbReference type="NCBI Taxonomy" id="90370"/>
    <lineage>
        <taxon>Bacteria</taxon>
        <taxon>Pseudomonadati</taxon>
        <taxon>Pseudomonadota</taxon>
        <taxon>Gammaproteobacteria</taxon>
        <taxon>Enterobacterales</taxon>
        <taxon>Enterobacteriaceae</taxon>
        <taxon>Salmonella</taxon>
    </lineage>
</organism>
<protein>
    <recommendedName>
        <fullName evidence="1">Tyrosine--tRNA ligase</fullName>
        <ecNumber evidence="1">6.1.1.1</ecNumber>
    </recommendedName>
    <alternativeName>
        <fullName evidence="1">Tyrosyl-tRNA synthetase</fullName>
        <shortName evidence="1">TyrRS</shortName>
    </alternativeName>
</protein>
<dbReference type="EC" id="6.1.1.1" evidence="1"/>
<dbReference type="EMBL" id="AL513382">
    <property type="protein sequence ID" value="CAD01918.1"/>
    <property type="molecule type" value="Genomic_DNA"/>
</dbReference>
<dbReference type="EMBL" id="AE014613">
    <property type="protein sequence ID" value="AAO68967.1"/>
    <property type="molecule type" value="Genomic_DNA"/>
</dbReference>
<dbReference type="RefSeq" id="NP_456081.1">
    <property type="nucleotide sequence ID" value="NC_003198.1"/>
</dbReference>
<dbReference type="RefSeq" id="WP_000168626.1">
    <property type="nucleotide sequence ID" value="NZ_WSUR01000011.1"/>
</dbReference>
<dbReference type="SMR" id="Q8XG70"/>
<dbReference type="STRING" id="220341.gene:17585608"/>
<dbReference type="KEGG" id="stt:t1317"/>
<dbReference type="KEGG" id="sty:STY1673"/>
<dbReference type="PATRIC" id="fig|220341.7.peg.1683"/>
<dbReference type="eggNOG" id="COG0162">
    <property type="taxonomic scope" value="Bacteria"/>
</dbReference>
<dbReference type="HOGENOM" id="CLU_024003_0_3_6"/>
<dbReference type="OMA" id="YMMAKDS"/>
<dbReference type="OrthoDB" id="9804243at2"/>
<dbReference type="Proteomes" id="UP000000541">
    <property type="component" value="Chromosome"/>
</dbReference>
<dbReference type="Proteomes" id="UP000002670">
    <property type="component" value="Chromosome"/>
</dbReference>
<dbReference type="GO" id="GO:0005829">
    <property type="term" value="C:cytosol"/>
    <property type="evidence" value="ECO:0007669"/>
    <property type="project" value="TreeGrafter"/>
</dbReference>
<dbReference type="GO" id="GO:0005524">
    <property type="term" value="F:ATP binding"/>
    <property type="evidence" value="ECO:0007669"/>
    <property type="project" value="UniProtKB-UniRule"/>
</dbReference>
<dbReference type="GO" id="GO:0003723">
    <property type="term" value="F:RNA binding"/>
    <property type="evidence" value="ECO:0007669"/>
    <property type="project" value="UniProtKB-KW"/>
</dbReference>
<dbReference type="GO" id="GO:0004831">
    <property type="term" value="F:tyrosine-tRNA ligase activity"/>
    <property type="evidence" value="ECO:0007669"/>
    <property type="project" value="UniProtKB-UniRule"/>
</dbReference>
<dbReference type="GO" id="GO:0006437">
    <property type="term" value="P:tyrosyl-tRNA aminoacylation"/>
    <property type="evidence" value="ECO:0007669"/>
    <property type="project" value="UniProtKB-UniRule"/>
</dbReference>
<dbReference type="CDD" id="cd00165">
    <property type="entry name" value="S4"/>
    <property type="match status" value="1"/>
</dbReference>
<dbReference type="CDD" id="cd00805">
    <property type="entry name" value="TyrRS_core"/>
    <property type="match status" value="1"/>
</dbReference>
<dbReference type="FunFam" id="1.10.240.10:FF:000001">
    <property type="entry name" value="Tyrosine--tRNA ligase"/>
    <property type="match status" value="1"/>
</dbReference>
<dbReference type="FunFam" id="3.10.290.10:FF:000007">
    <property type="entry name" value="Tyrosine--tRNA ligase"/>
    <property type="match status" value="1"/>
</dbReference>
<dbReference type="FunFam" id="3.40.50.620:FF:000008">
    <property type="entry name" value="Tyrosine--tRNA ligase"/>
    <property type="match status" value="1"/>
</dbReference>
<dbReference type="Gene3D" id="3.40.50.620">
    <property type="entry name" value="HUPs"/>
    <property type="match status" value="1"/>
</dbReference>
<dbReference type="Gene3D" id="3.10.290.10">
    <property type="entry name" value="RNA-binding S4 domain"/>
    <property type="match status" value="1"/>
</dbReference>
<dbReference type="Gene3D" id="1.10.240.10">
    <property type="entry name" value="Tyrosyl-Transfer RNA Synthetase"/>
    <property type="match status" value="1"/>
</dbReference>
<dbReference type="HAMAP" id="MF_02006">
    <property type="entry name" value="Tyr_tRNA_synth_type1"/>
    <property type="match status" value="1"/>
</dbReference>
<dbReference type="InterPro" id="IPR001412">
    <property type="entry name" value="aa-tRNA-synth_I_CS"/>
</dbReference>
<dbReference type="InterPro" id="IPR002305">
    <property type="entry name" value="aa-tRNA-synth_Ic"/>
</dbReference>
<dbReference type="InterPro" id="IPR014729">
    <property type="entry name" value="Rossmann-like_a/b/a_fold"/>
</dbReference>
<dbReference type="InterPro" id="IPR002942">
    <property type="entry name" value="S4_RNA-bd"/>
</dbReference>
<dbReference type="InterPro" id="IPR036986">
    <property type="entry name" value="S4_RNA-bd_sf"/>
</dbReference>
<dbReference type="InterPro" id="IPR054608">
    <property type="entry name" value="SYY-like_C"/>
</dbReference>
<dbReference type="InterPro" id="IPR002307">
    <property type="entry name" value="Tyr-tRNA-ligase"/>
</dbReference>
<dbReference type="InterPro" id="IPR024088">
    <property type="entry name" value="Tyr-tRNA-ligase_bac-type"/>
</dbReference>
<dbReference type="InterPro" id="IPR024107">
    <property type="entry name" value="Tyr-tRNA-ligase_bac_1"/>
</dbReference>
<dbReference type="NCBIfam" id="TIGR00234">
    <property type="entry name" value="tyrS"/>
    <property type="match status" value="1"/>
</dbReference>
<dbReference type="PANTHER" id="PTHR11766:SF0">
    <property type="entry name" value="TYROSINE--TRNA LIGASE, MITOCHONDRIAL"/>
    <property type="match status" value="1"/>
</dbReference>
<dbReference type="PANTHER" id="PTHR11766">
    <property type="entry name" value="TYROSYL-TRNA SYNTHETASE"/>
    <property type="match status" value="1"/>
</dbReference>
<dbReference type="Pfam" id="PF22421">
    <property type="entry name" value="SYY_C-terminal"/>
    <property type="match status" value="1"/>
</dbReference>
<dbReference type="Pfam" id="PF00579">
    <property type="entry name" value="tRNA-synt_1b"/>
    <property type="match status" value="1"/>
</dbReference>
<dbReference type="PRINTS" id="PR01040">
    <property type="entry name" value="TRNASYNTHTYR"/>
</dbReference>
<dbReference type="SMART" id="SM00363">
    <property type="entry name" value="S4"/>
    <property type="match status" value="1"/>
</dbReference>
<dbReference type="SUPFAM" id="SSF55174">
    <property type="entry name" value="Alpha-L RNA-binding motif"/>
    <property type="match status" value="1"/>
</dbReference>
<dbReference type="SUPFAM" id="SSF52374">
    <property type="entry name" value="Nucleotidylyl transferase"/>
    <property type="match status" value="1"/>
</dbReference>
<dbReference type="PROSITE" id="PS00178">
    <property type="entry name" value="AA_TRNA_LIGASE_I"/>
    <property type="match status" value="1"/>
</dbReference>
<dbReference type="PROSITE" id="PS50889">
    <property type="entry name" value="S4"/>
    <property type="match status" value="1"/>
</dbReference>
<name>SYY_SALTI</name>
<proteinExistence type="inferred from homology"/>
<keyword id="KW-0030">Aminoacyl-tRNA synthetase</keyword>
<keyword id="KW-0067">ATP-binding</keyword>
<keyword id="KW-0963">Cytoplasm</keyword>
<keyword id="KW-0436">Ligase</keyword>
<keyword id="KW-0547">Nucleotide-binding</keyword>
<keyword id="KW-0648">Protein biosynthesis</keyword>
<keyword id="KW-0694">RNA-binding</keyword>
<comment type="function">
    <text evidence="1">Catalyzes the attachment of tyrosine to tRNA(Tyr) in a two-step reaction: tyrosine is first activated by ATP to form Tyr-AMP and then transferred to the acceptor end of tRNA(Tyr).</text>
</comment>
<comment type="catalytic activity">
    <reaction evidence="1">
        <text>tRNA(Tyr) + L-tyrosine + ATP = L-tyrosyl-tRNA(Tyr) + AMP + diphosphate + H(+)</text>
        <dbReference type="Rhea" id="RHEA:10220"/>
        <dbReference type="Rhea" id="RHEA-COMP:9706"/>
        <dbReference type="Rhea" id="RHEA-COMP:9707"/>
        <dbReference type="ChEBI" id="CHEBI:15378"/>
        <dbReference type="ChEBI" id="CHEBI:30616"/>
        <dbReference type="ChEBI" id="CHEBI:33019"/>
        <dbReference type="ChEBI" id="CHEBI:58315"/>
        <dbReference type="ChEBI" id="CHEBI:78442"/>
        <dbReference type="ChEBI" id="CHEBI:78536"/>
        <dbReference type="ChEBI" id="CHEBI:456215"/>
        <dbReference type="EC" id="6.1.1.1"/>
    </reaction>
</comment>
<comment type="subunit">
    <text evidence="1">Homodimer.</text>
</comment>
<comment type="subcellular location">
    <subcellularLocation>
        <location evidence="1">Cytoplasm</location>
    </subcellularLocation>
</comment>
<comment type="similarity">
    <text evidence="1">Belongs to the class-I aminoacyl-tRNA synthetase family. TyrS type 1 subfamily.</text>
</comment>
<sequence>MASSNLIKQLQERGLVAQVTDEDALAERLAQGPIALYCGFDPTADSLHLGHLVPLLCLKRFQQAGHKPVALVGGATGLIGDPSFKAAERKLNTEETVQEWVAKIRKQVAPFLDFDCGENSAIAANNYDWFGSMNVLTFLRDIGKHFSVNQMINKEAVKQRLNRDDQGISFTEFSYNLLQGYDFACLNKLHGVALQIGGSDQWGNITSGIDLTRRLHQNQVFGLTVPLITKADGTKFGKTEGGAVWLDPKKTSPYKFYQFWINTADADVYRFLKFFTFMDIEEINALEEEDKNSGKAPRAQYVLAEQVTRLVHGEEGLVAAKRITECLFSGSLSALSEADFEQLAQDGVPMVEMEKGADLMQALVDAELQPSRGQARKTIASNAVTINGEKQSDPEYIFNDEDRLFGRYTLLRRGKKNYCLICWK</sequence>
<evidence type="ECO:0000255" key="1">
    <source>
        <dbReference type="HAMAP-Rule" id="MF_02006"/>
    </source>
</evidence>